<name>5DNU_SALAR</name>
<feature type="chain" id="PRO_1000084789" description="5'-deoxynucleotidase YfbR">
    <location>
        <begin position="1"/>
        <end position="199"/>
    </location>
</feature>
<feature type="domain" description="HD" evidence="2">
    <location>
        <begin position="30"/>
        <end position="142"/>
    </location>
</feature>
<feature type="binding site" evidence="1">
    <location>
        <begin position="18"/>
        <end position="19"/>
    </location>
    <ligand>
        <name>substrate</name>
    </ligand>
</feature>
<feature type="binding site" evidence="1">
    <location>
        <position position="33"/>
    </location>
    <ligand>
        <name>a divalent metal cation</name>
        <dbReference type="ChEBI" id="CHEBI:60240"/>
    </ligand>
</feature>
<feature type="binding site" evidence="1">
    <location>
        <position position="33"/>
    </location>
    <ligand>
        <name>substrate</name>
    </ligand>
</feature>
<feature type="binding site" evidence="1">
    <location>
        <position position="68"/>
    </location>
    <ligand>
        <name>a divalent metal cation</name>
        <dbReference type="ChEBI" id="CHEBI:60240"/>
    </ligand>
</feature>
<feature type="binding site" evidence="1">
    <location>
        <position position="69"/>
    </location>
    <ligand>
        <name>a divalent metal cation</name>
        <dbReference type="ChEBI" id="CHEBI:60240"/>
    </ligand>
</feature>
<feature type="binding site" evidence="1">
    <location>
        <position position="69"/>
    </location>
    <ligand>
        <name>substrate</name>
    </ligand>
</feature>
<feature type="binding site" evidence="1">
    <location>
        <begin position="77"/>
        <end position="80"/>
    </location>
    <ligand>
        <name>substrate</name>
    </ligand>
</feature>
<feature type="binding site" evidence="1">
    <location>
        <position position="137"/>
    </location>
    <ligand>
        <name>a divalent metal cation</name>
        <dbReference type="ChEBI" id="CHEBI:60240"/>
    </ligand>
</feature>
<feature type="binding site" evidence="1">
    <location>
        <position position="137"/>
    </location>
    <ligand>
        <name>substrate</name>
    </ligand>
</feature>
<feature type="site" description="Appears to be important in orienting the phosphate for catalysis" evidence="1">
    <location>
        <position position="18"/>
    </location>
</feature>
<accession>A9MJ94</accession>
<reference key="1">
    <citation type="submission" date="2007-11" db="EMBL/GenBank/DDBJ databases">
        <authorList>
            <consortium name="The Salmonella enterica serovar Arizonae Genome Sequencing Project"/>
            <person name="McClelland M."/>
            <person name="Sanderson E.K."/>
            <person name="Porwollik S."/>
            <person name="Spieth J."/>
            <person name="Clifton W.S."/>
            <person name="Fulton R."/>
            <person name="Chunyan W."/>
            <person name="Wollam A."/>
            <person name="Shah N."/>
            <person name="Pepin K."/>
            <person name="Bhonagiri V."/>
            <person name="Nash W."/>
            <person name="Johnson M."/>
            <person name="Thiruvilangam P."/>
            <person name="Wilson R."/>
        </authorList>
    </citation>
    <scope>NUCLEOTIDE SEQUENCE [LARGE SCALE GENOMIC DNA]</scope>
    <source>
        <strain>ATCC BAA-731 / CDC346-86 / RSK2980</strain>
    </source>
</reference>
<protein>
    <recommendedName>
        <fullName evidence="1">5'-deoxynucleotidase YfbR</fullName>
        <ecNumber evidence="1">3.1.3.89</ecNumber>
    </recommendedName>
    <alternativeName>
        <fullName evidence="1">5'-deoxyribonucleotidase</fullName>
    </alternativeName>
    <alternativeName>
        <fullName evidence="1">Nucleoside 5'-monophosphate phosphohydrolase</fullName>
    </alternativeName>
</protein>
<proteinExistence type="inferred from homology"/>
<evidence type="ECO:0000255" key="1">
    <source>
        <dbReference type="HAMAP-Rule" id="MF_01100"/>
    </source>
</evidence>
<evidence type="ECO:0000255" key="2">
    <source>
        <dbReference type="PROSITE-ProRule" id="PRU01175"/>
    </source>
</evidence>
<sequence length="199" mass="22703">MKQSHFFAHLSRLKLINRWPLMRNVRTENVSEHSLQVAMVAHALAAIKNRKFGGQLNAEHIALLAMYHDTSEVLTGDLPTPVKYFNSQIAQEYKAIEKIAQQKLVDMAPDELRDIFAPLIDENAWSEEEQAIVKQADALCAYLKCLEELSAGNNEFKLAKTRLEKTLALRRSQEMDYFMAVFVPSFHLSLDEISQDSPL</sequence>
<gene>
    <name evidence="1" type="primary">yfbR</name>
    <name type="ordered locus">SARI_00568</name>
</gene>
<dbReference type="EC" id="3.1.3.89" evidence="1"/>
<dbReference type="EMBL" id="CP000880">
    <property type="protein sequence ID" value="ABX20494.1"/>
    <property type="molecule type" value="Genomic_DNA"/>
</dbReference>
<dbReference type="SMR" id="A9MJ94"/>
<dbReference type="STRING" id="41514.SARI_00568"/>
<dbReference type="KEGG" id="ses:SARI_00568"/>
<dbReference type="HOGENOM" id="CLU_084784_0_0_6"/>
<dbReference type="Proteomes" id="UP000002084">
    <property type="component" value="Chromosome"/>
</dbReference>
<dbReference type="GO" id="GO:0005737">
    <property type="term" value="C:cytoplasm"/>
    <property type="evidence" value="ECO:0007669"/>
    <property type="project" value="UniProtKB-SubCell"/>
</dbReference>
<dbReference type="GO" id="GO:0002953">
    <property type="term" value="F:5'-deoxynucleotidase activity"/>
    <property type="evidence" value="ECO:0007669"/>
    <property type="project" value="UniProtKB-EC"/>
</dbReference>
<dbReference type="GO" id="GO:0046872">
    <property type="term" value="F:metal ion binding"/>
    <property type="evidence" value="ECO:0007669"/>
    <property type="project" value="UniProtKB-KW"/>
</dbReference>
<dbReference type="GO" id="GO:0000166">
    <property type="term" value="F:nucleotide binding"/>
    <property type="evidence" value="ECO:0007669"/>
    <property type="project" value="UniProtKB-KW"/>
</dbReference>
<dbReference type="FunFam" id="1.10.3210.10:FF:000002">
    <property type="entry name" value="Nucleotidase YfbR"/>
    <property type="match status" value="1"/>
</dbReference>
<dbReference type="Gene3D" id="1.10.3210.10">
    <property type="entry name" value="Hypothetical protein af1432"/>
    <property type="match status" value="1"/>
</dbReference>
<dbReference type="HAMAP" id="MF_01100">
    <property type="entry name" value="5DNU"/>
    <property type="match status" value="1"/>
</dbReference>
<dbReference type="InterPro" id="IPR003607">
    <property type="entry name" value="HD/PDEase_dom"/>
</dbReference>
<dbReference type="InterPro" id="IPR006674">
    <property type="entry name" value="HD_domain"/>
</dbReference>
<dbReference type="InterPro" id="IPR022971">
    <property type="entry name" value="YfbR"/>
</dbReference>
<dbReference type="InterPro" id="IPR039356">
    <property type="entry name" value="YfbR/HDDC2"/>
</dbReference>
<dbReference type="NCBIfam" id="NF003009">
    <property type="entry name" value="PRK03826.1"/>
    <property type="match status" value="1"/>
</dbReference>
<dbReference type="PANTHER" id="PTHR11845">
    <property type="entry name" value="5'-DEOXYNUCLEOTIDASE HDDC2"/>
    <property type="match status" value="1"/>
</dbReference>
<dbReference type="PANTHER" id="PTHR11845:SF13">
    <property type="entry name" value="5'-DEOXYNUCLEOTIDASE HDDC2"/>
    <property type="match status" value="1"/>
</dbReference>
<dbReference type="Pfam" id="PF12917">
    <property type="entry name" value="YfbR-like"/>
    <property type="match status" value="1"/>
</dbReference>
<dbReference type="SMART" id="SM00471">
    <property type="entry name" value="HDc"/>
    <property type="match status" value="1"/>
</dbReference>
<dbReference type="SUPFAM" id="SSF109604">
    <property type="entry name" value="HD-domain/PDEase-like"/>
    <property type="match status" value="1"/>
</dbReference>
<dbReference type="PROSITE" id="PS51831">
    <property type="entry name" value="HD"/>
    <property type="match status" value="1"/>
</dbReference>
<comment type="function">
    <text evidence="1">Catalyzes the strictly specific dephosphorylation of 2'-deoxyribonucleoside 5'-monophosphates.</text>
</comment>
<comment type="catalytic activity">
    <reaction evidence="1">
        <text>a 2'-deoxyribonucleoside 5'-phosphate + H2O = a 2'-deoxyribonucleoside + phosphate</text>
        <dbReference type="Rhea" id="RHEA:36167"/>
        <dbReference type="ChEBI" id="CHEBI:15377"/>
        <dbReference type="ChEBI" id="CHEBI:18274"/>
        <dbReference type="ChEBI" id="CHEBI:43474"/>
        <dbReference type="ChEBI" id="CHEBI:65317"/>
        <dbReference type="EC" id="3.1.3.89"/>
    </reaction>
</comment>
<comment type="cofactor">
    <cofactor evidence="1">
        <name>a divalent metal cation</name>
        <dbReference type="ChEBI" id="CHEBI:60240"/>
    </cofactor>
</comment>
<comment type="subunit">
    <text evidence="1">Homodimer.</text>
</comment>
<comment type="subcellular location">
    <subcellularLocation>
        <location evidence="1">Cytoplasm</location>
    </subcellularLocation>
</comment>
<comment type="similarity">
    <text evidence="1">Belongs to the 5DNU family.</text>
</comment>
<organism>
    <name type="scientific">Salmonella arizonae (strain ATCC BAA-731 / CDC346-86 / RSK2980)</name>
    <dbReference type="NCBI Taxonomy" id="41514"/>
    <lineage>
        <taxon>Bacteria</taxon>
        <taxon>Pseudomonadati</taxon>
        <taxon>Pseudomonadota</taxon>
        <taxon>Gammaproteobacteria</taxon>
        <taxon>Enterobacterales</taxon>
        <taxon>Enterobacteriaceae</taxon>
        <taxon>Salmonella</taxon>
    </lineage>
</organism>
<keyword id="KW-0963">Cytoplasm</keyword>
<keyword id="KW-0378">Hydrolase</keyword>
<keyword id="KW-0479">Metal-binding</keyword>
<keyword id="KW-0547">Nucleotide-binding</keyword>
<keyword id="KW-1185">Reference proteome</keyword>